<evidence type="ECO:0000250" key="1"/>
<evidence type="ECO:0000255" key="2">
    <source>
        <dbReference type="HAMAP-Rule" id="MF_00118"/>
    </source>
</evidence>
<dbReference type="EC" id="3.6.5.3" evidence="2"/>
<dbReference type="EMBL" id="CP000561">
    <property type="protein sequence ID" value="ABO08536.1"/>
    <property type="molecule type" value="Genomic_DNA"/>
</dbReference>
<dbReference type="RefSeq" id="WP_011849794.1">
    <property type="nucleotide sequence ID" value="NC_009073.1"/>
</dbReference>
<dbReference type="SMR" id="A3MV69"/>
<dbReference type="STRING" id="410359.Pcal_1111"/>
<dbReference type="GeneID" id="4910140"/>
<dbReference type="KEGG" id="pcl:Pcal_1111"/>
<dbReference type="eggNOG" id="arCOG01561">
    <property type="taxonomic scope" value="Archaea"/>
</dbReference>
<dbReference type="HOGENOM" id="CLU_007265_3_5_2"/>
<dbReference type="OrthoDB" id="371718at2157"/>
<dbReference type="Proteomes" id="UP000001431">
    <property type="component" value="Chromosome"/>
</dbReference>
<dbReference type="GO" id="GO:0005737">
    <property type="term" value="C:cytoplasm"/>
    <property type="evidence" value="ECO:0007669"/>
    <property type="project" value="UniProtKB-SubCell"/>
</dbReference>
<dbReference type="GO" id="GO:0005525">
    <property type="term" value="F:GTP binding"/>
    <property type="evidence" value="ECO:0007669"/>
    <property type="project" value="UniProtKB-UniRule"/>
</dbReference>
<dbReference type="GO" id="GO:0003924">
    <property type="term" value="F:GTPase activity"/>
    <property type="evidence" value="ECO:0007669"/>
    <property type="project" value="InterPro"/>
</dbReference>
<dbReference type="GO" id="GO:0003746">
    <property type="term" value="F:translation elongation factor activity"/>
    <property type="evidence" value="ECO:0007669"/>
    <property type="project" value="UniProtKB-UniRule"/>
</dbReference>
<dbReference type="CDD" id="cd01883">
    <property type="entry name" value="EF1_alpha"/>
    <property type="match status" value="1"/>
</dbReference>
<dbReference type="CDD" id="cd03693">
    <property type="entry name" value="EF1_alpha_II"/>
    <property type="match status" value="1"/>
</dbReference>
<dbReference type="CDD" id="cd03705">
    <property type="entry name" value="EF1_alpha_III"/>
    <property type="match status" value="1"/>
</dbReference>
<dbReference type="FunFam" id="2.40.30.10:FF:000005">
    <property type="entry name" value="Elongation factor 1-alpha"/>
    <property type="match status" value="1"/>
</dbReference>
<dbReference type="FunFam" id="2.40.30.10:FF:000020">
    <property type="entry name" value="Translation elongation factor EF-1"/>
    <property type="match status" value="1"/>
</dbReference>
<dbReference type="FunFam" id="3.40.50.300:FF:000204">
    <property type="entry name" value="Translation elongation factor Tu"/>
    <property type="match status" value="1"/>
</dbReference>
<dbReference type="Gene3D" id="3.40.50.300">
    <property type="entry name" value="P-loop containing nucleotide triphosphate hydrolases"/>
    <property type="match status" value="1"/>
</dbReference>
<dbReference type="Gene3D" id="2.40.30.10">
    <property type="entry name" value="Translation factors"/>
    <property type="match status" value="2"/>
</dbReference>
<dbReference type="HAMAP" id="MF_00118_A">
    <property type="entry name" value="EF_Tu_A"/>
    <property type="match status" value="1"/>
</dbReference>
<dbReference type="InterPro" id="IPR004161">
    <property type="entry name" value="EFTu-like_2"/>
</dbReference>
<dbReference type="InterPro" id="IPR029459">
    <property type="entry name" value="EFTU-type"/>
</dbReference>
<dbReference type="InterPro" id="IPR031157">
    <property type="entry name" value="G_TR_CS"/>
</dbReference>
<dbReference type="InterPro" id="IPR054696">
    <property type="entry name" value="GTP-eEF1A_C"/>
</dbReference>
<dbReference type="InterPro" id="IPR027417">
    <property type="entry name" value="P-loop_NTPase"/>
</dbReference>
<dbReference type="InterPro" id="IPR000795">
    <property type="entry name" value="T_Tr_GTP-bd_dom"/>
</dbReference>
<dbReference type="InterPro" id="IPR050100">
    <property type="entry name" value="TRAFAC_GTPase_members"/>
</dbReference>
<dbReference type="InterPro" id="IPR009000">
    <property type="entry name" value="Transl_B-barrel_sf"/>
</dbReference>
<dbReference type="InterPro" id="IPR009001">
    <property type="entry name" value="Transl_elong_EF1A/Init_IF2_C"/>
</dbReference>
<dbReference type="InterPro" id="IPR004539">
    <property type="entry name" value="Transl_elong_EF1A_euk/arc"/>
</dbReference>
<dbReference type="NCBIfam" id="TIGR00483">
    <property type="entry name" value="EF-1_alpha"/>
    <property type="match status" value="1"/>
</dbReference>
<dbReference type="NCBIfam" id="NF008969">
    <property type="entry name" value="PRK12317.1"/>
    <property type="match status" value="1"/>
</dbReference>
<dbReference type="PANTHER" id="PTHR23115">
    <property type="entry name" value="TRANSLATION FACTOR"/>
    <property type="match status" value="1"/>
</dbReference>
<dbReference type="Pfam" id="PF22594">
    <property type="entry name" value="GTP-eEF1A_C"/>
    <property type="match status" value="1"/>
</dbReference>
<dbReference type="Pfam" id="PF00009">
    <property type="entry name" value="GTP_EFTU"/>
    <property type="match status" value="1"/>
</dbReference>
<dbReference type="Pfam" id="PF03144">
    <property type="entry name" value="GTP_EFTU_D2"/>
    <property type="match status" value="1"/>
</dbReference>
<dbReference type="Pfam" id="PF14578">
    <property type="entry name" value="GTP_EFTU_D4"/>
    <property type="match status" value="1"/>
</dbReference>
<dbReference type="PRINTS" id="PR00315">
    <property type="entry name" value="ELONGATNFCT"/>
</dbReference>
<dbReference type="SUPFAM" id="SSF50465">
    <property type="entry name" value="EF-Tu/eEF-1alpha/eIF2-gamma C-terminal domain"/>
    <property type="match status" value="1"/>
</dbReference>
<dbReference type="SUPFAM" id="SSF52540">
    <property type="entry name" value="P-loop containing nucleoside triphosphate hydrolases"/>
    <property type="match status" value="1"/>
</dbReference>
<dbReference type="SUPFAM" id="SSF50447">
    <property type="entry name" value="Translation proteins"/>
    <property type="match status" value="1"/>
</dbReference>
<dbReference type="PROSITE" id="PS00301">
    <property type="entry name" value="G_TR_1"/>
    <property type="match status" value="1"/>
</dbReference>
<dbReference type="PROSITE" id="PS51722">
    <property type="entry name" value="G_TR_2"/>
    <property type="match status" value="1"/>
</dbReference>
<reference key="1">
    <citation type="submission" date="2007-02" db="EMBL/GenBank/DDBJ databases">
        <title>Complete sequence of Pyrobaculum calidifontis JCM 11548.</title>
        <authorList>
            <consortium name="US DOE Joint Genome Institute"/>
            <person name="Copeland A."/>
            <person name="Lucas S."/>
            <person name="Lapidus A."/>
            <person name="Barry K."/>
            <person name="Glavina del Rio T."/>
            <person name="Dalin E."/>
            <person name="Tice H."/>
            <person name="Pitluck S."/>
            <person name="Chain P."/>
            <person name="Malfatti S."/>
            <person name="Shin M."/>
            <person name="Vergez L."/>
            <person name="Schmutz J."/>
            <person name="Larimer F."/>
            <person name="Land M."/>
            <person name="Hauser L."/>
            <person name="Kyrpides N."/>
            <person name="Mikhailova N."/>
            <person name="Cozen A.E."/>
            <person name="Fitz-Gibbon S.T."/>
            <person name="House C.H."/>
            <person name="Saltikov C."/>
            <person name="Lowe T.M."/>
            <person name="Richardson P."/>
        </authorList>
    </citation>
    <scope>NUCLEOTIDE SEQUENCE [LARGE SCALE GENOMIC DNA]</scope>
    <source>
        <strain>DSM 21063 / JCM 11548 / VA1</strain>
    </source>
</reference>
<feature type="chain" id="PRO_0000337610" description="Elongation factor 1-alpha">
    <location>
        <begin position="1"/>
        <end position="444"/>
    </location>
</feature>
<feature type="domain" description="tr-type G">
    <location>
        <begin position="15"/>
        <end position="236"/>
    </location>
</feature>
<feature type="region of interest" description="G1" evidence="1">
    <location>
        <begin position="24"/>
        <end position="31"/>
    </location>
</feature>
<feature type="region of interest" description="G2" evidence="1">
    <location>
        <begin position="80"/>
        <end position="84"/>
    </location>
</feature>
<feature type="region of interest" description="G3" evidence="1">
    <location>
        <begin position="101"/>
        <end position="104"/>
    </location>
</feature>
<feature type="region of interest" description="G4" evidence="1">
    <location>
        <begin position="163"/>
        <end position="166"/>
    </location>
</feature>
<feature type="region of interest" description="G5" evidence="1">
    <location>
        <begin position="202"/>
        <end position="204"/>
    </location>
</feature>
<feature type="binding site" evidence="2">
    <location>
        <begin position="24"/>
        <end position="31"/>
    </location>
    <ligand>
        <name>GTP</name>
        <dbReference type="ChEBI" id="CHEBI:37565"/>
    </ligand>
</feature>
<feature type="binding site" evidence="2">
    <location>
        <position position="31"/>
    </location>
    <ligand>
        <name>Mg(2+)</name>
        <dbReference type="ChEBI" id="CHEBI:18420"/>
    </ligand>
</feature>
<feature type="binding site" evidence="2">
    <location>
        <begin position="101"/>
        <end position="105"/>
    </location>
    <ligand>
        <name>GTP</name>
        <dbReference type="ChEBI" id="CHEBI:37565"/>
    </ligand>
</feature>
<feature type="binding site" evidence="2">
    <location>
        <begin position="163"/>
        <end position="166"/>
    </location>
    <ligand>
        <name>GTP</name>
        <dbReference type="ChEBI" id="CHEBI:37565"/>
    </ligand>
</feature>
<organism>
    <name type="scientific">Pyrobaculum calidifontis (strain DSM 21063 / JCM 11548 / VA1)</name>
    <dbReference type="NCBI Taxonomy" id="410359"/>
    <lineage>
        <taxon>Archaea</taxon>
        <taxon>Thermoproteota</taxon>
        <taxon>Thermoprotei</taxon>
        <taxon>Thermoproteales</taxon>
        <taxon>Thermoproteaceae</taxon>
        <taxon>Pyrobaculum</taxon>
    </lineage>
</organism>
<sequence length="444" mass="48866">MPSIVLPPKPTALQKPHINLAVVGHVDNGKSTLVGRLLYETGYVDEKAFKEIEEMAKKMGKEDFAFAWILDRFKEERERGVTIEATHVGFETQKLFITIIDLPGHRDFVKNMIVGASQADAALFVISARPGEFETAIGPQGQGREHLFLIRTLGIQQLVVAVNKMDAVNYDQKRYEQVKAEVSKLLKLLGYDPSKIHFVPVSAIKGDNVRTKSPNTPWYQGPTLLEVLDTFQPPPRPTDKPLRMPIQDVFSITGAGTVVVGRVETGVLKVGDKVVIVPPAKVGDVRSIETHHMKLEQAQPGDNVGVNVRGINKEDVKRGDVLGKVDNIPTVAEEIVARIVVLWHPTAIGPGYAPVMHIHTATVPVQIVELVSKLDPRTGQAVEQKPQFIKQGDVAIVKIKPLKPVVAEKFSDFPPLGRFALRDMGRTIAAGQILEVKPAQVQIK</sequence>
<name>EF1A_PYRCJ</name>
<accession>A3MV69</accession>
<gene>
    <name evidence="2" type="primary">tuf</name>
    <name type="ordered locus">Pcal_1111</name>
</gene>
<proteinExistence type="inferred from homology"/>
<protein>
    <recommendedName>
        <fullName evidence="2">Elongation factor 1-alpha</fullName>
        <shortName evidence="2">EF-1-alpha</shortName>
        <ecNumber evidence="2">3.6.5.3</ecNumber>
    </recommendedName>
    <alternativeName>
        <fullName evidence="2">Elongation factor Tu</fullName>
        <shortName evidence="2">EF-Tu</shortName>
    </alternativeName>
</protein>
<keyword id="KW-0963">Cytoplasm</keyword>
<keyword id="KW-0251">Elongation factor</keyword>
<keyword id="KW-0342">GTP-binding</keyword>
<keyword id="KW-0378">Hydrolase</keyword>
<keyword id="KW-0460">Magnesium</keyword>
<keyword id="KW-0479">Metal-binding</keyword>
<keyword id="KW-0547">Nucleotide-binding</keyword>
<keyword id="KW-0648">Protein biosynthesis</keyword>
<comment type="function">
    <text evidence="2">GTP hydrolase that promotes the GTP-dependent binding of aminoacyl-tRNA to the A-site of ribosomes during protein biosynthesis.</text>
</comment>
<comment type="catalytic activity">
    <reaction evidence="2">
        <text>GTP + H2O = GDP + phosphate + H(+)</text>
        <dbReference type="Rhea" id="RHEA:19669"/>
        <dbReference type="ChEBI" id="CHEBI:15377"/>
        <dbReference type="ChEBI" id="CHEBI:15378"/>
        <dbReference type="ChEBI" id="CHEBI:37565"/>
        <dbReference type="ChEBI" id="CHEBI:43474"/>
        <dbReference type="ChEBI" id="CHEBI:58189"/>
        <dbReference type="EC" id="3.6.5.3"/>
    </reaction>
    <physiologicalReaction direction="left-to-right" evidence="2">
        <dbReference type="Rhea" id="RHEA:19670"/>
    </physiologicalReaction>
</comment>
<comment type="subcellular location">
    <subcellularLocation>
        <location evidence="2">Cytoplasm</location>
    </subcellularLocation>
</comment>
<comment type="similarity">
    <text evidence="2">Belongs to the TRAFAC class translation factor GTPase superfamily. Classic translation factor GTPase family. EF-Tu/EF-1A subfamily.</text>
</comment>